<organism>
    <name type="scientific">Shigella dysenteriae serotype 1 (strain Sd197)</name>
    <dbReference type="NCBI Taxonomy" id="300267"/>
    <lineage>
        <taxon>Bacteria</taxon>
        <taxon>Pseudomonadati</taxon>
        <taxon>Pseudomonadota</taxon>
        <taxon>Gammaproteobacteria</taxon>
        <taxon>Enterobacterales</taxon>
        <taxon>Enterobacteriaceae</taxon>
        <taxon>Shigella</taxon>
    </lineage>
</organism>
<proteinExistence type="evidence at protein level"/>
<gene>
    <name evidence="1" type="primary">dsbD</name>
    <name type="ordered locus">SDY_4441</name>
</gene>
<name>DSBD_SHIDS</name>
<accession>Q328D2</accession>
<keyword id="KW-0002">3D-structure</keyword>
<keyword id="KW-0997">Cell inner membrane</keyword>
<keyword id="KW-1003">Cell membrane</keyword>
<keyword id="KW-0201">Cytochrome c-type biogenesis</keyword>
<keyword id="KW-1015">Disulfide bond</keyword>
<keyword id="KW-0249">Electron transport</keyword>
<keyword id="KW-0472">Membrane</keyword>
<keyword id="KW-0520">NAD</keyword>
<keyword id="KW-0560">Oxidoreductase</keyword>
<keyword id="KW-0676">Redox-active center</keyword>
<keyword id="KW-1185">Reference proteome</keyword>
<keyword id="KW-0732">Signal</keyword>
<keyword id="KW-0812">Transmembrane</keyword>
<keyword id="KW-1133">Transmembrane helix</keyword>
<keyword id="KW-0813">Transport</keyword>
<dbReference type="EC" id="1.8.1.8" evidence="1"/>
<dbReference type="EMBL" id="CP000034">
    <property type="protein sequence ID" value="ABB64323.1"/>
    <property type="molecule type" value="Genomic_DNA"/>
</dbReference>
<dbReference type="RefSeq" id="WP_000068970.1">
    <property type="nucleotide sequence ID" value="NC_007606.1"/>
</dbReference>
<dbReference type="RefSeq" id="YP_405814.1">
    <property type="nucleotide sequence ID" value="NC_007606.1"/>
</dbReference>
<dbReference type="PDB" id="7AYE">
    <property type="method" value="X-ray"/>
    <property type="resolution" value="2.95 A"/>
    <property type="chains" value="B=438-565"/>
</dbReference>
<dbReference type="PDBsum" id="7AYE"/>
<dbReference type="SMR" id="Q328D2"/>
<dbReference type="STRING" id="300267.SDY_4441"/>
<dbReference type="EnsemblBacteria" id="ABB64323">
    <property type="protein sequence ID" value="ABB64323"/>
    <property type="gene ID" value="SDY_4441"/>
</dbReference>
<dbReference type="KEGG" id="sdy:SDY_4441"/>
<dbReference type="PATRIC" id="fig|300267.13.peg.5239"/>
<dbReference type="HOGENOM" id="CLU_014657_3_0_6"/>
<dbReference type="Proteomes" id="UP000002716">
    <property type="component" value="Chromosome"/>
</dbReference>
<dbReference type="GO" id="GO:0005886">
    <property type="term" value="C:plasma membrane"/>
    <property type="evidence" value="ECO:0007669"/>
    <property type="project" value="UniProtKB-SubCell"/>
</dbReference>
<dbReference type="GO" id="GO:0009055">
    <property type="term" value="F:electron transfer activity"/>
    <property type="evidence" value="ECO:0007669"/>
    <property type="project" value="UniProtKB-UniRule"/>
</dbReference>
<dbReference type="GO" id="GO:0047134">
    <property type="term" value="F:protein-disulfide reductase [NAD(P)H] activity"/>
    <property type="evidence" value="ECO:0007669"/>
    <property type="project" value="UniProtKB-UniRule"/>
</dbReference>
<dbReference type="GO" id="GO:0045454">
    <property type="term" value="P:cell redox homeostasis"/>
    <property type="evidence" value="ECO:0007669"/>
    <property type="project" value="TreeGrafter"/>
</dbReference>
<dbReference type="GO" id="GO:0017004">
    <property type="term" value="P:cytochrome complex assembly"/>
    <property type="evidence" value="ECO:0007669"/>
    <property type="project" value="UniProtKB-UniRule"/>
</dbReference>
<dbReference type="CDD" id="cd02953">
    <property type="entry name" value="DsbDgamma"/>
    <property type="match status" value="1"/>
</dbReference>
<dbReference type="FunFam" id="2.60.40.1250:FF:000001">
    <property type="entry name" value="Thiol:disulfide interchange protein DsbD"/>
    <property type="match status" value="1"/>
</dbReference>
<dbReference type="FunFam" id="3.40.30.10:FF:000116">
    <property type="entry name" value="Thiol:disulfide interchange protein DsbD"/>
    <property type="match status" value="1"/>
</dbReference>
<dbReference type="Gene3D" id="3.40.30.10">
    <property type="entry name" value="Glutaredoxin"/>
    <property type="match status" value="1"/>
</dbReference>
<dbReference type="Gene3D" id="2.60.40.1250">
    <property type="entry name" value="Thiol:disulfide interchange protein DsbD, N-terminal domain"/>
    <property type="match status" value="1"/>
</dbReference>
<dbReference type="HAMAP" id="MF_00399">
    <property type="entry name" value="DbsD"/>
    <property type="match status" value="1"/>
</dbReference>
<dbReference type="InterPro" id="IPR003834">
    <property type="entry name" value="Cyt_c_assmbl_TM_dom"/>
</dbReference>
<dbReference type="InterPro" id="IPR035671">
    <property type="entry name" value="DsbD_gamma"/>
</dbReference>
<dbReference type="InterPro" id="IPR028250">
    <property type="entry name" value="DsbDN"/>
</dbReference>
<dbReference type="InterPro" id="IPR036929">
    <property type="entry name" value="DsbDN_sf"/>
</dbReference>
<dbReference type="InterPro" id="IPR022910">
    <property type="entry name" value="Thiol_diS_interchange_DbsD"/>
</dbReference>
<dbReference type="InterPro" id="IPR012336">
    <property type="entry name" value="Thioredoxin-like_fold"/>
</dbReference>
<dbReference type="InterPro" id="IPR036249">
    <property type="entry name" value="Thioredoxin-like_sf"/>
</dbReference>
<dbReference type="InterPro" id="IPR017937">
    <property type="entry name" value="Thioredoxin_CS"/>
</dbReference>
<dbReference type="InterPro" id="IPR013766">
    <property type="entry name" value="Thioredoxin_domain"/>
</dbReference>
<dbReference type="NCBIfam" id="NF001419">
    <property type="entry name" value="PRK00293.1"/>
    <property type="match status" value="1"/>
</dbReference>
<dbReference type="PANTHER" id="PTHR32234">
    <property type="entry name" value="THIOL:DISULFIDE INTERCHANGE PROTEIN DSBD"/>
    <property type="match status" value="1"/>
</dbReference>
<dbReference type="PANTHER" id="PTHR32234:SF0">
    <property type="entry name" value="THIOL:DISULFIDE INTERCHANGE PROTEIN DSBD"/>
    <property type="match status" value="1"/>
</dbReference>
<dbReference type="Pfam" id="PF11412">
    <property type="entry name" value="DsbD_N"/>
    <property type="match status" value="1"/>
</dbReference>
<dbReference type="Pfam" id="PF02683">
    <property type="entry name" value="DsbD_TM"/>
    <property type="match status" value="1"/>
</dbReference>
<dbReference type="Pfam" id="PF13098">
    <property type="entry name" value="Thioredoxin_2"/>
    <property type="match status" value="1"/>
</dbReference>
<dbReference type="SUPFAM" id="SSF74863">
    <property type="entry name" value="Thiol:disulfide interchange protein DsbD, N-terminal domain (DsbD-alpha)"/>
    <property type="match status" value="1"/>
</dbReference>
<dbReference type="SUPFAM" id="SSF52833">
    <property type="entry name" value="Thioredoxin-like"/>
    <property type="match status" value="1"/>
</dbReference>
<dbReference type="PROSITE" id="PS00194">
    <property type="entry name" value="THIOREDOXIN_1"/>
    <property type="match status" value="1"/>
</dbReference>
<dbReference type="PROSITE" id="PS51352">
    <property type="entry name" value="THIOREDOXIN_2"/>
    <property type="match status" value="1"/>
</dbReference>
<sequence length="565" mass="61696">MAQRIFTLILLLCSTSVFAGLFDAPGRSQFVPADQAFTFDFQQNQHDLNLTWQIKDGYYLYRKQIRITPEHAKIADVQLPQGVWHEDEFYGKSEIYRDRLTLPVTINQASAGATLTVTYQGCADAGFCYPPETKTVPLSEVVANNAAPQPVSVPQQEQPTAQLPFSALWALLIGIGIAFTPCVLPMYPLISGIVLGGKQRLSTARALLLTFIYVQGMALTYTALGLVVAAAGLQFQAALQHPYVLIGLAIVFTLLAMSMFGLFTLQLPSSLQTRLTLMSNRQQGGSPGGVFVMGAIAGLICSPCTTAPLSAILLYIAQSGNMWLGGGTLYLYALGMGLPLMLITVFGNRLLPKSGPWMEQVKTAFGFVILALPVFLLERVIGDIWGLRLWSALGVAFFGGAFITSLQAKRGWMRVVQIILLAAALVSVRPLQDWAFGATHTAQTQTHLNFTQIKTVDELNQALVEAKGKPVMLDLYADWCVACKEFEKYTFSDPQVQKALADTVLLQANVTANDAQDVALLKHLNVLGLPTILFFDGQGQEHPQARVTGFMDAETFSAHLRDRQP</sequence>
<comment type="function">
    <text evidence="1">Required to facilitate the formation of correct disulfide bonds in some periplasmic proteins and for the assembly of the periplasmic c-type cytochromes. Acts by transferring electrons from cytoplasmic thioredoxin to the periplasm. This transfer involves a cascade of disulfide bond formation and reduction steps.</text>
</comment>
<comment type="catalytic activity">
    <reaction evidence="1">
        <text>[protein]-dithiol + NAD(+) = [protein]-disulfide + NADH + H(+)</text>
        <dbReference type="Rhea" id="RHEA:18749"/>
        <dbReference type="Rhea" id="RHEA-COMP:10593"/>
        <dbReference type="Rhea" id="RHEA-COMP:10594"/>
        <dbReference type="ChEBI" id="CHEBI:15378"/>
        <dbReference type="ChEBI" id="CHEBI:29950"/>
        <dbReference type="ChEBI" id="CHEBI:50058"/>
        <dbReference type="ChEBI" id="CHEBI:57540"/>
        <dbReference type="ChEBI" id="CHEBI:57945"/>
        <dbReference type="EC" id="1.8.1.8"/>
    </reaction>
</comment>
<comment type="catalytic activity">
    <reaction evidence="1">
        <text>[protein]-dithiol + NADP(+) = [protein]-disulfide + NADPH + H(+)</text>
        <dbReference type="Rhea" id="RHEA:18753"/>
        <dbReference type="Rhea" id="RHEA-COMP:10593"/>
        <dbReference type="Rhea" id="RHEA-COMP:10594"/>
        <dbReference type="ChEBI" id="CHEBI:15378"/>
        <dbReference type="ChEBI" id="CHEBI:29950"/>
        <dbReference type="ChEBI" id="CHEBI:50058"/>
        <dbReference type="ChEBI" id="CHEBI:57783"/>
        <dbReference type="ChEBI" id="CHEBI:58349"/>
        <dbReference type="EC" id="1.8.1.8"/>
    </reaction>
</comment>
<comment type="subcellular location">
    <subcellularLocation>
        <location evidence="1">Cell inner membrane</location>
        <topology evidence="1">Multi-pass membrane protein</topology>
    </subcellularLocation>
</comment>
<comment type="similarity">
    <text evidence="1">Belongs to the thioredoxin family. DsbD subfamily.</text>
</comment>
<evidence type="ECO:0000255" key="1">
    <source>
        <dbReference type="HAMAP-Rule" id="MF_00399"/>
    </source>
</evidence>
<evidence type="ECO:0007829" key="2">
    <source>
        <dbReference type="PDB" id="7AYE"/>
    </source>
</evidence>
<protein>
    <recommendedName>
        <fullName evidence="1">Thiol:disulfide interchange protein DsbD</fullName>
        <ecNumber evidence="1">1.8.1.8</ecNumber>
    </recommendedName>
    <alternativeName>
        <fullName evidence="1">Protein-disulfide reductase</fullName>
        <shortName evidence="1">Disulfide reductase</shortName>
    </alternativeName>
</protein>
<feature type="signal peptide" evidence="1">
    <location>
        <begin position="1"/>
        <end position="19"/>
    </location>
</feature>
<feature type="chain" id="PRO_0000304397" description="Thiol:disulfide interchange protein DsbD">
    <location>
        <begin position="20"/>
        <end position="565"/>
    </location>
</feature>
<feature type="transmembrane region" description="Helical" evidence="1">
    <location>
        <begin position="163"/>
        <end position="183"/>
    </location>
</feature>
<feature type="transmembrane region" description="Helical" evidence="1">
    <location>
        <begin position="208"/>
        <end position="228"/>
    </location>
</feature>
<feature type="transmembrane region" description="Helical" evidence="1">
    <location>
        <begin position="243"/>
        <end position="263"/>
    </location>
</feature>
<feature type="transmembrane region" description="Helical" evidence="1">
    <location>
        <begin position="296"/>
        <end position="316"/>
    </location>
</feature>
<feature type="transmembrane region" description="Helical" evidence="1">
    <location>
        <begin position="323"/>
        <end position="343"/>
    </location>
</feature>
<feature type="transmembrane region" description="Helical" evidence="1">
    <location>
        <begin position="365"/>
        <end position="385"/>
    </location>
</feature>
<feature type="transmembrane region" description="Helical" evidence="1">
    <location>
        <begin position="386"/>
        <end position="406"/>
    </location>
</feature>
<feature type="domain" description="Thioredoxin" evidence="1">
    <location>
        <begin position="434"/>
        <end position="565"/>
    </location>
</feature>
<feature type="disulfide bond" description="Redox-active" evidence="1">
    <location>
        <begin position="122"/>
        <end position="128"/>
    </location>
</feature>
<feature type="disulfide bond" description="Redox-active" evidence="1">
    <location>
        <begin position="182"/>
        <end position="304"/>
    </location>
</feature>
<feature type="disulfide bond" description="Redox-active" evidence="1">
    <location>
        <begin position="480"/>
        <end position="483"/>
    </location>
</feature>
<feature type="strand" evidence="2">
    <location>
        <begin position="451"/>
        <end position="453"/>
    </location>
</feature>
<feature type="helix" evidence="2">
    <location>
        <begin position="456"/>
        <end position="466"/>
    </location>
</feature>
<feature type="strand" evidence="2">
    <location>
        <begin position="471"/>
        <end position="476"/>
    </location>
</feature>
<feature type="helix" evidence="2">
    <location>
        <begin position="481"/>
        <end position="490"/>
    </location>
</feature>
<feature type="helix" evidence="2">
    <location>
        <begin position="494"/>
        <end position="499"/>
    </location>
</feature>
<feature type="turn" evidence="2">
    <location>
        <begin position="500"/>
        <end position="502"/>
    </location>
</feature>
<feature type="strand" evidence="2">
    <location>
        <begin position="503"/>
        <end position="509"/>
    </location>
</feature>
<feature type="helix" evidence="2">
    <location>
        <begin position="515"/>
        <end position="524"/>
    </location>
</feature>
<feature type="strand" evidence="2">
    <location>
        <begin position="528"/>
        <end position="530"/>
    </location>
</feature>
<feature type="strand" evidence="2">
    <location>
        <begin position="532"/>
        <end position="535"/>
    </location>
</feature>
<feature type="helix" evidence="2">
    <location>
        <begin position="553"/>
        <end position="559"/>
    </location>
</feature>
<reference key="1">
    <citation type="journal article" date="2005" name="Nucleic Acids Res.">
        <title>Genome dynamics and diversity of Shigella species, the etiologic agents of bacillary dysentery.</title>
        <authorList>
            <person name="Yang F."/>
            <person name="Yang J."/>
            <person name="Zhang X."/>
            <person name="Chen L."/>
            <person name="Jiang Y."/>
            <person name="Yan Y."/>
            <person name="Tang X."/>
            <person name="Wang J."/>
            <person name="Xiong Z."/>
            <person name="Dong J."/>
            <person name="Xue Y."/>
            <person name="Zhu Y."/>
            <person name="Xu X."/>
            <person name="Sun L."/>
            <person name="Chen S."/>
            <person name="Nie H."/>
            <person name="Peng J."/>
            <person name="Xu J."/>
            <person name="Wang Y."/>
            <person name="Yuan Z."/>
            <person name="Wen Y."/>
            <person name="Yao Z."/>
            <person name="Shen Y."/>
            <person name="Qiang B."/>
            <person name="Hou Y."/>
            <person name="Yu J."/>
            <person name="Jin Q."/>
        </authorList>
    </citation>
    <scope>NUCLEOTIDE SEQUENCE [LARGE SCALE GENOMIC DNA]</scope>
    <source>
        <strain>Sd197</strain>
    </source>
</reference>